<dbReference type="EMBL" id="BX569692">
    <property type="protein sequence ID" value="CAE07741.1"/>
    <property type="molecule type" value="Genomic_DNA"/>
</dbReference>
<dbReference type="RefSeq" id="WP_011128090.1">
    <property type="nucleotide sequence ID" value="NC_005070.1"/>
</dbReference>
<dbReference type="SMR" id="Q7U6W0"/>
<dbReference type="STRING" id="84588.SYNW1226"/>
<dbReference type="KEGG" id="syw:SYNW1226"/>
<dbReference type="eggNOG" id="COG0267">
    <property type="taxonomic scope" value="Bacteria"/>
</dbReference>
<dbReference type="HOGENOM" id="CLU_190949_3_0_3"/>
<dbReference type="Proteomes" id="UP000001422">
    <property type="component" value="Chromosome"/>
</dbReference>
<dbReference type="GO" id="GO:0005737">
    <property type="term" value="C:cytoplasm"/>
    <property type="evidence" value="ECO:0007669"/>
    <property type="project" value="UniProtKB-ARBA"/>
</dbReference>
<dbReference type="GO" id="GO:1990904">
    <property type="term" value="C:ribonucleoprotein complex"/>
    <property type="evidence" value="ECO:0007669"/>
    <property type="project" value="UniProtKB-KW"/>
</dbReference>
<dbReference type="GO" id="GO:0005840">
    <property type="term" value="C:ribosome"/>
    <property type="evidence" value="ECO:0007669"/>
    <property type="project" value="UniProtKB-KW"/>
</dbReference>
<dbReference type="GO" id="GO:0003735">
    <property type="term" value="F:structural constituent of ribosome"/>
    <property type="evidence" value="ECO:0007669"/>
    <property type="project" value="InterPro"/>
</dbReference>
<dbReference type="GO" id="GO:0006412">
    <property type="term" value="P:translation"/>
    <property type="evidence" value="ECO:0007669"/>
    <property type="project" value="UniProtKB-UniRule"/>
</dbReference>
<dbReference type="Gene3D" id="2.20.28.120">
    <property type="entry name" value="Ribosomal protein L33"/>
    <property type="match status" value="1"/>
</dbReference>
<dbReference type="HAMAP" id="MF_00294">
    <property type="entry name" value="Ribosomal_bL33"/>
    <property type="match status" value="1"/>
</dbReference>
<dbReference type="InterPro" id="IPR001705">
    <property type="entry name" value="Ribosomal_bL33"/>
</dbReference>
<dbReference type="InterPro" id="IPR018264">
    <property type="entry name" value="Ribosomal_bL33_CS"/>
</dbReference>
<dbReference type="InterPro" id="IPR038584">
    <property type="entry name" value="Ribosomal_bL33_sf"/>
</dbReference>
<dbReference type="InterPro" id="IPR011332">
    <property type="entry name" value="Ribosomal_zn-bd"/>
</dbReference>
<dbReference type="NCBIfam" id="NF001764">
    <property type="entry name" value="PRK00504.1"/>
    <property type="match status" value="1"/>
</dbReference>
<dbReference type="NCBIfam" id="NF001860">
    <property type="entry name" value="PRK00595.1"/>
    <property type="match status" value="1"/>
</dbReference>
<dbReference type="NCBIfam" id="TIGR01023">
    <property type="entry name" value="rpmG_bact"/>
    <property type="match status" value="1"/>
</dbReference>
<dbReference type="PANTHER" id="PTHR43168">
    <property type="entry name" value="50S RIBOSOMAL PROTEIN L33, CHLOROPLASTIC"/>
    <property type="match status" value="1"/>
</dbReference>
<dbReference type="PANTHER" id="PTHR43168:SF2">
    <property type="entry name" value="LARGE RIBOSOMAL SUBUNIT PROTEIN BL33C"/>
    <property type="match status" value="1"/>
</dbReference>
<dbReference type="Pfam" id="PF00471">
    <property type="entry name" value="Ribosomal_L33"/>
    <property type="match status" value="1"/>
</dbReference>
<dbReference type="SUPFAM" id="SSF57829">
    <property type="entry name" value="Zn-binding ribosomal proteins"/>
    <property type="match status" value="1"/>
</dbReference>
<dbReference type="PROSITE" id="PS00582">
    <property type="entry name" value="RIBOSOMAL_L33"/>
    <property type="match status" value="1"/>
</dbReference>
<feature type="chain" id="PRO_1000004202" description="Large ribosomal subunit protein bL33">
    <location>
        <begin position="1"/>
        <end position="64"/>
    </location>
</feature>
<sequence length="64" mass="7460">MAKNKGVRIVITLECTECRSNPAKRSPGVSRYTTEKNRRNTTERLEIKKFCPHCNKMTPHKEIK</sequence>
<proteinExistence type="inferred from homology"/>
<keyword id="KW-0687">Ribonucleoprotein</keyword>
<keyword id="KW-0689">Ribosomal protein</keyword>
<reference key="1">
    <citation type="journal article" date="2003" name="Nature">
        <title>The genome of a motile marine Synechococcus.</title>
        <authorList>
            <person name="Palenik B."/>
            <person name="Brahamsha B."/>
            <person name="Larimer F.W."/>
            <person name="Land M.L."/>
            <person name="Hauser L."/>
            <person name="Chain P."/>
            <person name="Lamerdin J.E."/>
            <person name="Regala W."/>
            <person name="Allen E.E."/>
            <person name="McCarren J."/>
            <person name="Paulsen I.T."/>
            <person name="Dufresne A."/>
            <person name="Partensky F."/>
            <person name="Webb E.A."/>
            <person name="Waterbury J."/>
        </authorList>
    </citation>
    <scope>NUCLEOTIDE SEQUENCE [LARGE SCALE GENOMIC DNA]</scope>
    <source>
        <strain>WH8102</strain>
    </source>
</reference>
<accession>Q7U6W0</accession>
<name>RL33_PARMW</name>
<organism>
    <name type="scientific">Parasynechococcus marenigrum (strain WH8102)</name>
    <dbReference type="NCBI Taxonomy" id="84588"/>
    <lineage>
        <taxon>Bacteria</taxon>
        <taxon>Bacillati</taxon>
        <taxon>Cyanobacteriota</taxon>
        <taxon>Cyanophyceae</taxon>
        <taxon>Synechococcales</taxon>
        <taxon>Prochlorococcaceae</taxon>
        <taxon>Parasynechococcus</taxon>
        <taxon>Parasynechococcus marenigrum</taxon>
    </lineage>
</organism>
<gene>
    <name evidence="1" type="primary">rpmG</name>
    <name evidence="1" type="synonym">rpl33</name>
    <name type="ordered locus">SYNW1226</name>
</gene>
<evidence type="ECO:0000255" key="1">
    <source>
        <dbReference type="HAMAP-Rule" id="MF_00294"/>
    </source>
</evidence>
<evidence type="ECO:0000305" key="2"/>
<protein>
    <recommendedName>
        <fullName evidence="1">Large ribosomal subunit protein bL33</fullName>
    </recommendedName>
    <alternativeName>
        <fullName evidence="2">50S ribosomal protein L33</fullName>
    </alternativeName>
</protein>
<comment type="similarity">
    <text evidence="1">Belongs to the bacterial ribosomal protein bL33 family.</text>
</comment>